<accession>Q0NZX5</accession>
<accession>A0A8T1N161</accession>
<keyword id="KW-0002">3D-structure</keyword>
<keyword id="KW-0053">Apoptosis</keyword>
<keyword id="KW-0106">Calcium</keyword>
<keyword id="KW-1217">Cell adhesion impairing toxin</keyword>
<keyword id="KW-0145">Chemotaxis</keyword>
<keyword id="KW-0903">Direct protein sequencing</keyword>
<keyword id="KW-1015">Disulfide bond</keyword>
<keyword id="KW-1199">Hemostasis impairing toxin</keyword>
<keyword id="KW-0378">Hydrolase</keyword>
<keyword id="KW-0479">Metal-binding</keyword>
<keyword id="KW-1201">Platelet aggregation inhibiting toxin</keyword>
<keyword id="KW-0964">Secreted</keyword>
<keyword id="KW-0732">Signal</keyword>
<keyword id="KW-0800">Toxin</keyword>
<keyword id="KW-0862">Zinc</keyword>
<keyword id="KW-0865">Zymogen</keyword>
<protein>
    <recommendedName>
        <fullName>Zinc metalloproteinase/disintegrin</fullName>
    </recommendedName>
    <component>
        <recommendedName>
            <fullName evidence="15">Snake venom metalloproteinase</fullName>
            <shortName evidence="15">SVMP</shortName>
            <ecNumber>3.4.24.-</ecNumber>
        </recommendedName>
    </component>
    <component>
        <recommendedName>
            <fullName evidence="11 12 13 14">Disintegrin jarastatin</fullName>
            <shortName evidence="12 14">JT</shortName>
        </recommendedName>
        <alternativeName>
            <fullName>Platelet aggregation activation inhibitor</fullName>
        </alternativeName>
    </component>
    <component>
        <recommendedName>
            <fullName evidence="13">Disintegrin jarastatin-AGEEC</fullName>
        </recommendedName>
    </component>
    <component>
        <recommendedName>
            <fullName evidence="13">Disintegrin jarastatin-GEEC</fullName>
        </recommendedName>
    </component>
    <component>
        <recommendedName>
            <fullName evidence="13">Disintegrin jarastatin-EC</fullName>
        </recommendedName>
    </component>
</protein>
<comment type="function">
    <molecule>Disintegrin jarastatin</molecule>
    <text evidence="6 7 9 10">Binds alpha-5/beta-1 (ITGAV/ITGB1), alpha-V/beta-3 (ITGAV/ITGB3) and alpha-M/beta-2 (ITGAM/ITGB2) integrins (PubMed:14697344, PubMed:17854854, PubMed:37972836). Is a potent inhibitor of platelet aggregation induced by ADP, collagen, and thrombin (PubMed:10471323). Induces neutrophil chemotaxis and inhibits the chemotaxis of human neutrophils toward fMLP, IL-8, and jarastatin itself (PubMed:10471323, PubMed:14697344). Directly activates an integrin-coupled signaling and modulate the MAPK pathway in different ways, leading the neutrophils to express different functional response (PubMed:14697344). Induces Erk-2 translocation to nucleus and a delay of the spontaneous apoptosis of neutrophils (PubMed:14697344). Increases the IL-8 mRNA levels in neutrophils (PubMed:14697344). When injected simultaneously with melanoma cells in mice, jarastatin, flavoridin (FL) and kistrin (KR) significantly reduce tumor lung colonization (PubMed:17854854). Inhibits mouse melanoma B16F10 cell growth in vitro (PubMed:17854854). When it interacts with melanoma cells, it induces actin cytoskeleton rearrangement, increasing actin polymerization and PTK2/FAK1 phosphorylation (PubMed:17854854). Interferes with NF-kappaB translocation in melanoma cells (PubMed:17854854).</text>
</comment>
<comment type="biophysicochemical properties">
    <phDependence>
        <text evidence="10">Optimum pH is 7.4 (strongest interaction with alpha-5/beta-1 (ITGAV/ITGB1)).</text>
    </phDependence>
</comment>
<comment type="subunit">
    <molecule>Disintegrin jarastatin</molecule>
    <text evidence="18 20">Monomer.</text>
</comment>
<comment type="subcellular location">
    <subcellularLocation>
        <location evidence="6 8">Secreted</location>
    </subcellularLocation>
</comment>
<comment type="tissue specificity">
    <text evidence="17 19">Expressed by the venom gland.</text>
</comment>
<comment type="mass spectrometry">
    <molecule>Disintegrin jarastatin</molecule>
</comment>
<comment type="miscellaneous">
    <text>The disintegrin belongs to the medium disintegrin subfamily.</text>
</comment>
<comment type="similarity">
    <text evidence="16">Belongs to the venom metalloproteinase (M12B) family. P-II subfamily. P-IIa sub-subfamily.</text>
</comment>
<dbReference type="EC" id="3.4.24.-"/>
<dbReference type="EMBL" id="JAGTXL010027693">
    <property type="protein sequence ID" value="KAG5858135.1"/>
    <property type="molecule type" value="Genomic_DNA"/>
</dbReference>
<dbReference type="EMBL" id="DQ375441">
    <property type="protein sequence ID" value="ABD34834.1"/>
    <property type="molecule type" value="mRNA"/>
</dbReference>
<dbReference type="PDB" id="8S9E">
    <property type="method" value="NMR"/>
    <property type="chains" value="A=406-478"/>
</dbReference>
<dbReference type="PDBsum" id="8S9E"/>
<dbReference type="SMR" id="Q0NZX5"/>
<dbReference type="Proteomes" id="UP000681084">
    <property type="component" value="Unassembled WGS sequence"/>
</dbReference>
<dbReference type="GO" id="GO:0005576">
    <property type="term" value="C:extracellular region"/>
    <property type="evidence" value="ECO:0007669"/>
    <property type="project" value="UniProtKB-SubCell"/>
</dbReference>
<dbReference type="GO" id="GO:0090729">
    <property type="term" value="F:toxin activity"/>
    <property type="evidence" value="ECO:0007669"/>
    <property type="project" value="UniProtKB-KW"/>
</dbReference>
<dbReference type="GO" id="GO:0006915">
    <property type="term" value="P:apoptotic process"/>
    <property type="evidence" value="ECO:0007669"/>
    <property type="project" value="UniProtKB-KW"/>
</dbReference>
<dbReference type="GO" id="GO:0006935">
    <property type="term" value="P:chemotaxis"/>
    <property type="evidence" value="ECO:0007669"/>
    <property type="project" value="UniProtKB-KW"/>
</dbReference>
<dbReference type="CDD" id="cd04269">
    <property type="entry name" value="ZnMc_adamalysin_II_like"/>
    <property type="match status" value="1"/>
</dbReference>
<dbReference type="FunFam" id="4.10.70.10:FF:000005">
    <property type="entry name" value="Zinc metalloproteinase/disintegrin"/>
    <property type="match status" value="1"/>
</dbReference>
<dbReference type="Gene3D" id="4.10.70.10">
    <property type="entry name" value="Disintegrin domain"/>
    <property type="match status" value="1"/>
</dbReference>
<dbReference type="InterPro" id="IPR018358">
    <property type="entry name" value="Disintegrin_CS"/>
</dbReference>
<dbReference type="InterPro" id="IPR001762">
    <property type="entry name" value="Disintegrin_dom"/>
</dbReference>
<dbReference type="InterPro" id="IPR036436">
    <property type="entry name" value="Disintegrin_dom_sf"/>
</dbReference>
<dbReference type="PANTHER" id="PTHR11905">
    <property type="entry name" value="ADAM A DISINTEGRIN AND METALLOPROTEASE DOMAIN"/>
    <property type="match status" value="1"/>
</dbReference>
<dbReference type="PANTHER" id="PTHR11905:SF159">
    <property type="entry name" value="ADAM METALLOPROTEASE"/>
    <property type="match status" value="1"/>
</dbReference>
<dbReference type="Pfam" id="PF00200">
    <property type="entry name" value="Disintegrin"/>
    <property type="match status" value="1"/>
</dbReference>
<dbReference type="PRINTS" id="PR00289">
    <property type="entry name" value="DISINTEGRIN"/>
</dbReference>
<dbReference type="SMART" id="SM00050">
    <property type="entry name" value="DISIN"/>
    <property type="match status" value="1"/>
</dbReference>
<dbReference type="SUPFAM" id="SSF57552">
    <property type="entry name" value="Blood coagulation inhibitor (disintegrin)"/>
    <property type="match status" value="1"/>
</dbReference>
<dbReference type="PROSITE" id="PS50215">
    <property type="entry name" value="ADAM_MEPRO"/>
    <property type="match status" value="1"/>
</dbReference>
<dbReference type="PROSITE" id="PS00427">
    <property type="entry name" value="DISINTEGRIN_1"/>
    <property type="match status" value="1"/>
</dbReference>
<dbReference type="PROSITE" id="PS50214">
    <property type="entry name" value="DISINTEGRIN_2"/>
    <property type="match status" value="1"/>
</dbReference>
<dbReference type="PROSITE" id="PS00142">
    <property type="entry name" value="ZINC_PROTEASE"/>
    <property type="match status" value="1"/>
</dbReference>
<reference evidence="22" key="1">
    <citation type="journal article" date="2021" name="Proc. Natl. Acad. Sci. U.S.A.">
        <title>Tracking the recruitment and evolution of snake toxins using the evolutionary context provided by the Bothrops jararaca genome.</title>
        <authorList>
            <person name="Almeida D.D."/>
            <person name="Viala V.L."/>
            <person name="Nachtigall P.G."/>
            <person name="Broe M."/>
            <person name="Gibbs H.L."/>
            <person name="Serrano S.M.T."/>
            <person name="Moura-da-Silva A.M."/>
            <person name="Ho P.L."/>
            <person name="Nishiyama-Jr M.Y."/>
            <person name="Junqueira-de-Azevedo I.L.M."/>
        </authorList>
    </citation>
    <scope>NUCLEOTIDE SEQUENCE [LARGE SCALE GENOMIC DNA]</scope>
    <source>
        <tissue>Blood</tissue>
    </source>
</reference>
<reference evidence="21" key="2">
    <citation type="journal article" date="2006" name="Toxicon">
        <title>Molecular diversity of disintegrin-like domains within metalloproteinase precursors of Bothrops jararaca.</title>
        <authorList>
            <person name="Cidade D.A.P."/>
            <person name="Wermelinger L.S."/>
            <person name="Lobo-Hajdu G."/>
            <person name="Davila A.M.R."/>
            <person name="Bon C."/>
            <person name="Zingali R.B."/>
            <person name="Albano R.M."/>
        </authorList>
    </citation>
    <scope>NUCLEOTIDE SEQUENCE [MRNA] OF 391-478</scope>
    <scope>PARTIAL PROTEIN SEQUENCE</scope>
    <scope>MASS SPECTROMETRY</scope>
    <scope>SUBCELLULAR LOCATION</scope>
    <source>
        <tissue>Venom</tissue>
        <tissue>Venom gland</tissue>
    </source>
</reference>
<reference key="3">
    <citation type="journal article" date="1999" name="Exp. Cell Res.">
        <title>Effects of jarastatin, a novel snake venom disintegrin, on neutrophil migration and actin cytoskeleton dynamics.</title>
        <authorList>
            <person name="Coelho A.L.J."/>
            <person name="de Freitas M.S."/>
            <person name="Oliveira-Carvalho A.L."/>
            <person name="Moura-Neto V."/>
            <person name="Zingali R.B."/>
            <person name="Barja-Fidalgo C."/>
        </authorList>
    </citation>
    <scope>PROTEIN SEQUENCE OF 406-474</scope>
    <scope>FUNCTION</scope>
    <scope>SUBCELLULAR LOCATION</scope>
</reference>
<reference key="4">
    <citation type="journal article" date="2004" name="Exp. Cell Res.">
        <title>RGD- and MLD-disintegrins, jarastatin and EC3, activate integrin-mediated signaling modulating the human neutrophils chemotaxis, apoptosis and IL-8 gene expression.</title>
        <authorList>
            <person name="Coelho A.L.J."/>
            <person name="De Freitas M.S."/>
            <person name="Mariano-Oliveira A."/>
            <person name="Rapozo D.C.M."/>
            <person name="Pinto L.F.R."/>
            <person name="Niewiarowski S."/>
            <person name="Zingali R.B."/>
            <person name="Marcinkiewicz C."/>
            <person name="Barja-Fidalgo C."/>
        </authorList>
    </citation>
    <scope>FUNCTION</scope>
</reference>
<reference key="5">
    <citation type="journal article" date="2007" name="Toxicon">
        <title>Effect of RGD-disintegrins on melanoma cell growth and metastasis: involvement of the actin cytoskeleton, FAK and c-Fos.</title>
        <authorList>
            <person name="Oliva I.B."/>
            <person name="Coelho R.M."/>
            <person name="Barcellos G.G."/>
            <person name="Saldanha-Gama R."/>
            <person name="Wermelinger L.S."/>
            <person name="Marcinkiewicz C."/>
            <person name="Zingali R.B."/>
            <person name="Barja-Fidalgo C."/>
        </authorList>
    </citation>
    <scope>FUNCTION ON MELANOMA CELLS</scope>
</reference>
<reference key="6">
    <citation type="journal article" date="2024" name="Int. J. Biol. Macromol.">
        <title>Toward the mechanism of jarastatin (rJast) inhibition of the integrin alphaVbeta3.</title>
        <authorList>
            <person name="Vasconcelos A.A."/>
            <person name="Estrada J.C."/>
            <person name="Caruso I.P."/>
            <person name="Kurtenbach E."/>
            <person name="Zingali R.B."/>
            <person name="Almeida F.C.L."/>
        </authorList>
    </citation>
    <scope>STRUCTURE BY NMR OF 406-478 (DISINTEGRIN)</scope>
    <scope>DISULFIDE BONDS</scope>
    <scope>RECOMBINANT EXPRESSION</scope>
    <scope>3D-STRUCTURE MODELING OF DISINTEGRIN IN COMPLEX WITH ALPHA-V/BETA-3 INTEGRIN</scope>
    <scope>BIOPHYSICOCHEMICAL PROPERTIES</scope>
</reference>
<organism>
    <name type="scientific">Bothrops jararaca</name>
    <name type="common">Jararaca</name>
    <name type="synonym">Bothrops jajaraca</name>
    <dbReference type="NCBI Taxonomy" id="8724"/>
    <lineage>
        <taxon>Eukaryota</taxon>
        <taxon>Metazoa</taxon>
        <taxon>Chordata</taxon>
        <taxon>Craniata</taxon>
        <taxon>Vertebrata</taxon>
        <taxon>Euteleostomi</taxon>
        <taxon>Lepidosauria</taxon>
        <taxon>Squamata</taxon>
        <taxon>Bifurcata</taxon>
        <taxon>Unidentata</taxon>
        <taxon>Episquamata</taxon>
        <taxon>Toxicofera</taxon>
        <taxon>Serpentes</taxon>
        <taxon>Colubroidea</taxon>
        <taxon>Viperidae</taxon>
        <taxon>Crotalinae</taxon>
        <taxon>Bothrops</taxon>
    </lineage>
</organism>
<proteinExistence type="evidence at protein level"/>
<sequence>MIEVLLVTICLAAFPYQGSSIILESGNVNDYEVIYPRKVTALPKGAVQPKYEDAMQYELKVNGEPVVLHLEKNKGLFSKDYSETHYSPDGRKITTNPPVEDHCYYHGRIENDADSTASISACNGLKGHFKLQGETYLIEPLKLSDSEAHAVFKFENVEKEDEAPKMCGVTQNWESYEPIKKASQSNLTPEHQRYIELFLVVDHGMFMKYNGNSDKIRRRIHQMVNIMKEAYRYLYIDIALTGVEIWSNKDMINVQPAAPQTLDSFGEWRKTDLLNRKSHDNAQLLTSTDFNGPTIGLAYVGSMCDPKRSTAVIEDHSETDLLVAVTMAHELGHNLGIRHDTGSCSCGGYSCIMAPVISHDIAKYFSDCSYIQCWDFIMKDNPQCILNKQLRTDTVSTPVSGNELLEAGEECDCGTPGNPCCDAATCKLRPGAQCAEGLCCDQCRFMKEGTVCRRARGDDMDDYCNGISAGCPRNPFHA</sequence>
<name>VM2JA_BOTJA</name>
<evidence type="ECO:0000250" key="1">
    <source>
        <dbReference type="UniProtKB" id="Q98SP2"/>
    </source>
</evidence>
<evidence type="ECO:0000255" key="2"/>
<evidence type="ECO:0000255" key="3">
    <source>
        <dbReference type="PROSITE-ProRule" id="PRU00068"/>
    </source>
</evidence>
<evidence type="ECO:0000255" key="4">
    <source>
        <dbReference type="PROSITE-ProRule" id="PRU00276"/>
    </source>
</evidence>
<evidence type="ECO:0000255" key="5">
    <source>
        <dbReference type="PROSITE-ProRule" id="PRU00293"/>
    </source>
</evidence>
<evidence type="ECO:0000269" key="6">
    <source>
    </source>
</evidence>
<evidence type="ECO:0000269" key="7">
    <source>
    </source>
</evidence>
<evidence type="ECO:0000269" key="8">
    <source>
    </source>
</evidence>
<evidence type="ECO:0000269" key="9">
    <source>
    </source>
</evidence>
<evidence type="ECO:0000269" key="10">
    <source>
    </source>
</evidence>
<evidence type="ECO:0000303" key="11">
    <source>
    </source>
</evidence>
<evidence type="ECO:0000303" key="12">
    <source>
    </source>
</evidence>
<evidence type="ECO:0000303" key="13">
    <source>
    </source>
</evidence>
<evidence type="ECO:0000303" key="14">
    <source>
    </source>
</evidence>
<evidence type="ECO:0000303" key="15">
    <source>
    </source>
</evidence>
<evidence type="ECO:0000305" key="16"/>
<evidence type="ECO:0000305" key="17">
    <source>
    </source>
</evidence>
<evidence type="ECO:0000305" key="18">
    <source>
    </source>
</evidence>
<evidence type="ECO:0000305" key="19">
    <source>
    </source>
</evidence>
<evidence type="ECO:0000305" key="20">
    <source>
    </source>
</evidence>
<evidence type="ECO:0000312" key="21">
    <source>
        <dbReference type="EMBL" id="ABD34834.1"/>
    </source>
</evidence>
<evidence type="ECO:0000312" key="22">
    <source>
        <dbReference type="EMBL" id="KAG5858135.1"/>
    </source>
</evidence>
<evidence type="ECO:0007744" key="23">
    <source>
        <dbReference type="PDB" id="8S9E"/>
    </source>
</evidence>
<evidence type="ECO:0007829" key="24">
    <source>
        <dbReference type="PDB" id="8S9E"/>
    </source>
</evidence>
<feature type="signal peptide" evidence="2">
    <location>
        <begin position="1"/>
        <end position="20"/>
    </location>
</feature>
<feature type="propeptide" id="PRO_0000462194" evidence="1">
    <location>
        <begin position="21"/>
        <end position="187"/>
    </location>
</feature>
<feature type="chain" id="PRO_0000462195" description="Snake venom metalloproteinase" evidence="1">
    <location>
        <begin position="188"/>
        <end position="389"/>
    </location>
</feature>
<feature type="propeptide" id="PRO_0000340281" evidence="17">
    <location>
        <begin position="390"/>
        <end position="405"/>
    </location>
</feature>
<feature type="chain" id="PRO_0000340282" description="Disintegrin jarastatin" evidence="17">
    <location>
        <begin position="406"/>
        <end position="478"/>
    </location>
</feature>
<feature type="chain" id="PRO_0000340283" description="Disintegrin jarastatin-AGEEC" evidence="19">
    <location>
        <begin position="407"/>
        <end position="478"/>
    </location>
</feature>
<feature type="chain" id="PRO_0000340284" description="Disintegrin jarastatin-GEEC" evidence="19">
    <location>
        <begin position="408"/>
        <end position="478"/>
    </location>
</feature>
<feature type="chain" id="PRO_0000340285" description="Disintegrin jarastatin-EC" evidence="19">
    <location>
        <begin position="410"/>
        <end position="478"/>
    </location>
</feature>
<feature type="domain" description="Disintegrin" evidence="3">
    <location>
        <begin position="397"/>
        <end position="478"/>
    </location>
</feature>
<feature type="short sequence motif" description="Cell attachment site" evidence="3 5">
    <location>
        <begin position="456"/>
        <end position="458"/>
    </location>
</feature>
<feature type="active site" evidence="4">
    <location>
        <position position="330"/>
    </location>
</feature>
<feature type="binding site" evidence="4">
    <location>
        <position position="329"/>
    </location>
    <ligand>
        <name>Zn(2+)</name>
        <dbReference type="ChEBI" id="CHEBI:29105"/>
        <note>catalytic</note>
    </ligand>
</feature>
<feature type="binding site" evidence="4">
    <location>
        <position position="333"/>
    </location>
    <ligand>
        <name>Zn(2+)</name>
        <dbReference type="ChEBI" id="CHEBI:29105"/>
        <note>catalytic</note>
    </ligand>
</feature>
<feature type="binding site" evidence="4">
    <location>
        <position position="339"/>
    </location>
    <ligand>
        <name>Zn(2+)</name>
        <dbReference type="ChEBI" id="CHEBI:29105"/>
        <note>catalytic</note>
    </ligand>
</feature>
<feature type="disulfide bond" evidence="4">
    <location>
        <begin position="304"/>
        <end position="384"/>
    </location>
</feature>
<feature type="disulfide bond" evidence="4">
    <location>
        <begin position="344"/>
        <end position="368"/>
    </location>
</feature>
<feature type="disulfide bond" evidence="4">
    <location>
        <begin position="346"/>
        <end position="351"/>
    </location>
</feature>
<feature type="disulfide bond" evidence="10 23">
    <location>
        <begin position="411"/>
        <end position="426"/>
    </location>
</feature>
<feature type="disulfide bond" evidence="10 23">
    <location>
        <begin position="413"/>
        <end position="421"/>
    </location>
</feature>
<feature type="disulfide bond" evidence="10 23">
    <location>
        <begin position="420"/>
        <end position="443"/>
    </location>
</feature>
<feature type="disulfide bond" evidence="10 23">
    <location>
        <begin position="434"/>
        <end position="440"/>
    </location>
</feature>
<feature type="disulfide bond" evidence="10 23">
    <location>
        <begin position="439"/>
        <end position="464"/>
    </location>
</feature>
<feature type="disulfide bond" evidence="3 10 23">
    <location>
        <begin position="452"/>
        <end position="471"/>
    </location>
</feature>
<feature type="sequence conflict" description="In Ref. 3; AA sequence." evidence="16" ref="3">
    <original>G</original>
    <variation>E</variation>
    <location>
        <position position="417"/>
    </location>
</feature>
<feature type="strand" evidence="24">
    <location>
        <begin position="408"/>
        <end position="412"/>
    </location>
</feature>
<feature type="strand" evidence="24">
    <location>
        <begin position="414"/>
        <end position="416"/>
    </location>
</feature>
<feature type="strand" evidence="24">
    <location>
        <begin position="418"/>
        <end position="420"/>
    </location>
</feature>
<feature type="helix" evidence="24">
    <location>
        <begin position="423"/>
        <end position="426"/>
    </location>
</feature>
<feature type="strand" evidence="24">
    <location>
        <begin position="435"/>
        <end position="437"/>
    </location>
</feature>
<feature type="strand" evidence="24">
    <location>
        <begin position="451"/>
        <end position="453"/>
    </location>
</feature>
<feature type="strand" evidence="24">
    <location>
        <begin position="457"/>
        <end position="459"/>
    </location>
</feature>